<dbReference type="EC" id="6.3.2.4" evidence="2"/>
<dbReference type="EMBL" id="BA000035">
    <property type="protein sequence ID" value="BAC18241.1"/>
    <property type="molecule type" value="Genomic_DNA"/>
</dbReference>
<dbReference type="RefSeq" id="WP_011075442.1">
    <property type="nucleotide sequence ID" value="NC_004369.1"/>
</dbReference>
<dbReference type="SMR" id="Q8FPQ9"/>
<dbReference type="STRING" id="196164.gene:10741845"/>
<dbReference type="KEGG" id="cef:CE1431"/>
<dbReference type="eggNOG" id="COG1181">
    <property type="taxonomic scope" value="Bacteria"/>
</dbReference>
<dbReference type="HOGENOM" id="CLU_039268_0_1_11"/>
<dbReference type="OrthoDB" id="9813261at2"/>
<dbReference type="UniPathway" id="UPA00219"/>
<dbReference type="Proteomes" id="UP000001409">
    <property type="component" value="Chromosome"/>
</dbReference>
<dbReference type="GO" id="GO:0005829">
    <property type="term" value="C:cytosol"/>
    <property type="evidence" value="ECO:0007669"/>
    <property type="project" value="TreeGrafter"/>
</dbReference>
<dbReference type="GO" id="GO:0005524">
    <property type="term" value="F:ATP binding"/>
    <property type="evidence" value="ECO:0007669"/>
    <property type="project" value="UniProtKB-KW"/>
</dbReference>
<dbReference type="GO" id="GO:0008716">
    <property type="term" value="F:D-alanine-D-alanine ligase activity"/>
    <property type="evidence" value="ECO:0007669"/>
    <property type="project" value="UniProtKB-UniRule"/>
</dbReference>
<dbReference type="GO" id="GO:0046872">
    <property type="term" value="F:metal ion binding"/>
    <property type="evidence" value="ECO:0007669"/>
    <property type="project" value="UniProtKB-KW"/>
</dbReference>
<dbReference type="GO" id="GO:0071555">
    <property type="term" value="P:cell wall organization"/>
    <property type="evidence" value="ECO:0007669"/>
    <property type="project" value="UniProtKB-KW"/>
</dbReference>
<dbReference type="GO" id="GO:0009252">
    <property type="term" value="P:peptidoglycan biosynthetic process"/>
    <property type="evidence" value="ECO:0007669"/>
    <property type="project" value="UniProtKB-UniRule"/>
</dbReference>
<dbReference type="GO" id="GO:0008360">
    <property type="term" value="P:regulation of cell shape"/>
    <property type="evidence" value="ECO:0007669"/>
    <property type="project" value="UniProtKB-KW"/>
</dbReference>
<dbReference type="FunFam" id="3.30.470.20:FF:000008">
    <property type="entry name" value="D-alanine--D-alanine ligase"/>
    <property type="match status" value="1"/>
</dbReference>
<dbReference type="Gene3D" id="3.40.50.20">
    <property type="match status" value="1"/>
</dbReference>
<dbReference type="Gene3D" id="3.30.1490.20">
    <property type="entry name" value="ATP-grasp fold, A domain"/>
    <property type="match status" value="1"/>
</dbReference>
<dbReference type="Gene3D" id="3.30.470.20">
    <property type="entry name" value="ATP-grasp fold, B domain"/>
    <property type="match status" value="1"/>
</dbReference>
<dbReference type="HAMAP" id="MF_00047">
    <property type="entry name" value="Dala_Dala_lig"/>
    <property type="match status" value="1"/>
</dbReference>
<dbReference type="InterPro" id="IPR011761">
    <property type="entry name" value="ATP-grasp"/>
</dbReference>
<dbReference type="InterPro" id="IPR013815">
    <property type="entry name" value="ATP_grasp_subdomain_1"/>
</dbReference>
<dbReference type="InterPro" id="IPR000291">
    <property type="entry name" value="D-Ala_lig_Van_CS"/>
</dbReference>
<dbReference type="InterPro" id="IPR005905">
    <property type="entry name" value="D_ala_D_ala"/>
</dbReference>
<dbReference type="InterPro" id="IPR011095">
    <property type="entry name" value="Dala_Dala_lig_C"/>
</dbReference>
<dbReference type="InterPro" id="IPR011127">
    <property type="entry name" value="Dala_Dala_lig_N"/>
</dbReference>
<dbReference type="InterPro" id="IPR016185">
    <property type="entry name" value="PreATP-grasp_dom_sf"/>
</dbReference>
<dbReference type="NCBIfam" id="TIGR01205">
    <property type="entry name" value="D_ala_D_alaTIGR"/>
    <property type="match status" value="1"/>
</dbReference>
<dbReference type="NCBIfam" id="NF002528">
    <property type="entry name" value="PRK01966.1-4"/>
    <property type="match status" value="1"/>
</dbReference>
<dbReference type="PANTHER" id="PTHR23132">
    <property type="entry name" value="D-ALANINE--D-ALANINE LIGASE"/>
    <property type="match status" value="1"/>
</dbReference>
<dbReference type="PANTHER" id="PTHR23132:SF25">
    <property type="entry name" value="D-ALANINE--D-ALANINE LIGASE A"/>
    <property type="match status" value="1"/>
</dbReference>
<dbReference type="Pfam" id="PF07478">
    <property type="entry name" value="Dala_Dala_lig_C"/>
    <property type="match status" value="1"/>
</dbReference>
<dbReference type="Pfam" id="PF01820">
    <property type="entry name" value="Dala_Dala_lig_N"/>
    <property type="match status" value="1"/>
</dbReference>
<dbReference type="PIRSF" id="PIRSF039102">
    <property type="entry name" value="Ddl/VanB"/>
    <property type="match status" value="1"/>
</dbReference>
<dbReference type="SUPFAM" id="SSF56059">
    <property type="entry name" value="Glutathione synthetase ATP-binding domain-like"/>
    <property type="match status" value="1"/>
</dbReference>
<dbReference type="SUPFAM" id="SSF52440">
    <property type="entry name" value="PreATP-grasp domain"/>
    <property type="match status" value="1"/>
</dbReference>
<dbReference type="PROSITE" id="PS50975">
    <property type="entry name" value="ATP_GRASP"/>
    <property type="match status" value="1"/>
</dbReference>
<dbReference type="PROSITE" id="PS00843">
    <property type="entry name" value="DALA_DALA_LIGASE_1"/>
    <property type="match status" value="1"/>
</dbReference>
<dbReference type="PROSITE" id="PS00844">
    <property type="entry name" value="DALA_DALA_LIGASE_2"/>
    <property type="match status" value="1"/>
</dbReference>
<protein>
    <recommendedName>
        <fullName evidence="2">D-alanine--D-alanine ligase</fullName>
        <ecNumber evidence="2">6.3.2.4</ecNumber>
    </recommendedName>
    <alternativeName>
        <fullName evidence="2">D-Ala-D-Ala ligase</fullName>
    </alternativeName>
    <alternativeName>
        <fullName evidence="2">D-alanylalanine synthetase</fullName>
    </alternativeName>
</protein>
<name>DDL_COREF</name>
<accession>Q8FPQ9</accession>
<gene>
    <name evidence="2" type="primary">ddl</name>
    <name type="ordered locus">CE1431</name>
</gene>
<feature type="chain" id="PRO_0000177811" description="D-alanine--D-alanine ligase">
    <location>
        <begin position="1"/>
        <end position="361"/>
    </location>
</feature>
<feature type="domain" description="ATP-grasp" evidence="2">
    <location>
        <begin position="149"/>
        <end position="353"/>
    </location>
</feature>
<feature type="binding site" evidence="2">
    <location>
        <begin position="176"/>
        <end position="231"/>
    </location>
    <ligand>
        <name>ATP</name>
        <dbReference type="ChEBI" id="CHEBI:30616"/>
    </ligand>
</feature>
<feature type="binding site" evidence="2">
    <location>
        <position position="308"/>
    </location>
    <ligand>
        <name>Mg(2+)</name>
        <dbReference type="ChEBI" id="CHEBI:18420"/>
        <label>1</label>
    </ligand>
</feature>
<feature type="binding site" evidence="2">
    <location>
        <position position="320"/>
    </location>
    <ligand>
        <name>Mg(2+)</name>
        <dbReference type="ChEBI" id="CHEBI:18420"/>
        <label>1</label>
    </ligand>
</feature>
<feature type="binding site" evidence="2">
    <location>
        <position position="320"/>
    </location>
    <ligand>
        <name>Mg(2+)</name>
        <dbReference type="ChEBI" id="CHEBI:18420"/>
        <label>2</label>
    </ligand>
</feature>
<feature type="binding site" evidence="2">
    <location>
        <position position="322"/>
    </location>
    <ligand>
        <name>Mg(2+)</name>
        <dbReference type="ChEBI" id="CHEBI:18420"/>
        <label>2</label>
    </ligand>
</feature>
<organism>
    <name type="scientific">Corynebacterium efficiens (strain DSM 44549 / YS-314 / AJ 12310 / JCM 11189 / NBRC 100395)</name>
    <dbReference type="NCBI Taxonomy" id="196164"/>
    <lineage>
        <taxon>Bacteria</taxon>
        <taxon>Bacillati</taxon>
        <taxon>Actinomycetota</taxon>
        <taxon>Actinomycetes</taxon>
        <taxon>Mycobacteriales</taxon>
        <taxon>Corynebacteriaceae</taxon>
        <taxon>Corynebacterium</taxon>
    </lineage>
</organism>
<reference key="1">
    <citation type="journal article" date="2003" name="Genome Res.">
        <title>Comparative complete genome sequence analysis of the amino acid replacements responsible for the thermostability of Corynebacterium efficiens.</title>
        <authorList>
            <person name="Nishio Y."/>
            <person name="Nakamura Y."/>
            <person name="Kawarabayasi Y."/>
            <person name="Usuda Y."/>
            <person name="Kimura E."/>
            <person name="Sugimoto S."/>
            <person name="Matsui K."/>
            <person name="Yamagishi A."/>
            <person name="Kikuchi H."/>
            <person name="Ikeo K."/>
            <person name="Gojobori T."/>
        </authorList>
    </citation>
    <scope>NUCLEOTIDE SEQUENCE [LARGE SCALE GENOMIC DNA]</scope>
    <source>
        <strain>DSM 44549 / YS-314 / AJ 12310 / JCM 11189 / NBRC 100395</strain>
    </source>
</reference>
<sequence>MSNSNSAKVRVAVLYGGRSAEHSVSCVSAGAIIAHLDPEKYEVIPVGITTDGAWVVGESDPERLRLVDRTMPEVQRREEIRPSLDPAHRGEFHFADGSLYATADVIFPVLHGRFGEDGTIQGMFALSDIPVVGPGVLSSAAGMDKEFTKKLMAAEGLPIGREVILRDRAELTDAEKKLLGLPVFVKPARGGSSIGISKVSRWEDLPAAVDLARQHDEKVIVESEIVGPEVECGVLQYPDGRIVASLPAMLRGTEDGEGGFYDFDTKYLDNVVTAEIPAPLDEEIIELVQSLAVETFQALACEGLARVDFFVTANGPVLNEINTMPGFTPISMYPQMFAASGVGYEELLDVLVQQALHRSSN</sequence>
<evidence type="ECO:0000250" key="1"/>
<evidence type="ECO:0000255" key="2">
    <source>
        <dbReference type="HAMAP-Rule" id="MF_00047"/>
    </source>
</evidence>
<proteinExistence type="inferred from homology"/>
<keyword id="KW-0067">ATP-binding</keyword>
<keyword id="KW-0133">Cell shape</keyword>
<keyword id="KW-0961">Cell wall biogenesis/degradation</keyword>
<keyword id="KW-0963">Cytoplasm</keyword>
<keyword id="KW-0436">Ligase</keyword>
<keyword id="KW-0460">Magnesium</keyword>
<keyword id="KW-0464">Manganese</keyword>
<keyword id="KW-0479">Metal-binding</keyword>
<keyword id="KW-0547">Nucleotide-binding</keyword>
<keyword id="KW-0573">Peptidoglycan synthesis</keyword>
<keyword id="KW-1185">Reference proteome</keyword>
<comment type="function">
    <text evidence="2">Cell wall formation.</text>
</comment>
<comment type="catalytic activity">
    <reaction evidence="2">
        <text>2 D-alanine + ATP = D-alanyl-D-alanine + ADP + phosphate + H(+)</text>
        <dbReference type="Rhea" id="RHEA:11224"/>
        <dbReference type="ChEBI" id="CHEBI:15378"/>
        <dbReference type="ChEBI" id="CHEBI:30616"/>
        <dbReference type="ChEBI" id="CHEBI:43474"/>
        <dbReference type="ChEBI" id="CHEBI:57416"/>
        <dbReference type="ChEBI" id="CHEBI:57822"/>
        <dbReference type="ChEBI" id="CHEBI:456216"/>
        <dbReference type="EC" id="6.3.2.4"/>
    </reaction>
</comment>
<comment type="cofactor">
    <cofactor evidence="1">
        <name>Mg(2+)</name>
        <dbReference type="ChEBI" id="CHEBI:18420"/>
    </cofactor>
    <cofactor evidence="1">
        <name>Mn(2+)</name>
        <dbReference type="ChEBI" id="CHEBI:29035"/>
    </cofactor>
    <text evidence="1">Binds 2 magnesium or manganese ions per subunit.</text>
</comment>
<comment type="pathway">
    <text evidence="2">Cell wall biogenesis; peptidoglycan biosynthesis.</text>
</comment>
<comment type="subcellular location">
    <subcellularLocation>
        <location evidence="2">Cytoplasm</location>
    </subcellularLocation>
</comment>
<comment type="similarity">
    <text evidence="2">Belongs to the D-alanine--D-alanine ligase family.</text>
</comment>